<protein>
    <recommendedName>
        <fullName evidence="1">Non-structural protein 1</fullName>
        <shortName evidence="1">NS1</shortName>
    </recommendedName>
    <alternativeName>
        <fullName evidence="1">NS1A</fullName>
    </alternativeName>
</protein>
<proteinExistence type="inferred from homology"/>
<keyword id="KW-0025">Alternative splicing</keyword>
<keyword id="KW-1262">Eukaryotic host gene expression shutoff by virus</keyword>
<keyword id="KW-1035">Host cytoplasm</keyword>
<keyword id="KW-1190">Host gene expression shutoff by virus</keyword>
<keyword id="KW-1192">Host mRNA suppression by virus</keyword>
<keyword id="KW-1048">Host nucleus</keyword>
<keyword id="KW-0945">Host-virus interaction</keyword>
<keyword id="KW-1090">Inhibition of host innate immune response by virus</keyword>
<keyword id="KW-1114">Inhibition of host interferon signaling pathway by virus</keyword>
<keyword id="KW-1102">Inhibition of host PKR by virus</keyword>
<keyword id="KW-1103">Inhibition of host pre-mRNA processing by virus</keyword>
<keyword id="KW-1088">Inhibition of host RIG-I by virus</keyword>
<keyword id="KW-1113">Inhibition of host RLR pathway by virus</keyword>
<keyword id="KW-0922">Interferon antiviral system evasion</keyword>
<keyword id="KW-0694">RNA-binding</keyword>
<keyword id="KW-0832">Ubl conjugation</keyword>
<keyword id="KW-0899">Viral immunoevasion</keyword>
<gene>
    <name evidence="1" type="primary">NS</name>
</gene>
<evidence type="ECO:0000255" key="1">
    <source>
        <dbReference type="HAMAP-Rule" id="MF_04066"/>
    </source>
</evidence>
<evidence type="ECO:0000256" key="2">
    <source>
        <dbReference type="SAM" id="MobiDB-lite"/>
    </source>
</evidence>
<name>NS1_I57A2</name>
<accession>P69273</accession>
<accession>P26131</accession>
<organism>
    <name type="scientific">Influenza A virus (strain A/Leningrad/134/17/1957 H2N2)</name>
    <dbReference type="NCBI Taxonomy" id="380984"/>
    <lineage>
        <taxon>Viruses</taxon>
        <taxon>Riboviria</taxon>
        <taxon>Orthornavirae</taxon>
        <taxon>Negarnaviricota</taxon>
        <taxon>Polyploviricotina</taxon>
        <taxon>Insthoviricetes</taxon>
        <taxon>Articulavirales</taxon>
        <taxon>Orthomyxoviridae</taxon>
        <taxon>Alphainfluenzavirus</taxon>
        <taxon>Alphainfluenzavirus influenzae</taxon>
        <taxon>Influenza A virus</taxon>
    </lineage>
</organism>
<sequence length="230" mass="26096">MDPNTVSSFQVDCFLWHVRKQVPDQELGDAPFLDRLRRDQKSLRGRGSTLGLNIETATRVGKQIVERILKEESDEALKMTMASAPASRYLTDMTIEEMSRDWFMLMPKQKVAGPLCIRMDQAIMDKNIILKANFSVIFDRLETLILLRAFTEEGAIVGEISPLPSLPGHTNEDVKNAIGVLIGGLEWNDNTVRVSKTLQRFAWRSSNENGRPPLTPKQKRKMARTIRSKV</sequence>
<feature type="chain" id="PRO_0000078933" description="Non-structural protein 1">
    <location>
        <begin position="1"/>
        <end position="230"/>
    </location>
</feature>
<feature type="region of interest" description="RNA-binding and homodimerization" evidence="1">
    <location>
        <begin position="1"/>
        <end position="73"/>
    </location>
</feature>
<feature type="region of interest" description="CPSF4-binding" evidence="1">
    <location>
        <begin position="180"/>
        <end position="215"/>
    </location>
</feature>
<feature type="region of interest" description="Disordered" evidence="2">
    <location>
        <begin position="205"/>
        <end position="230"/>
    </location>
</feature>
<feature type="region of interest" description="PABPN1-binding" evidence="1">
    <location>
        <begin position="223"/>
        <end position="230"/>
    </location>
</feature>
<feature type="short sequence motif" description="Nuclear localization signal" evidence="1">
    <location>
        <begin position="34"/>
        <end position="38"/>
    </location>
</feature>
<feature type="short sequence motif" description="Nuclear export signal" evidence="1">
    <location>
        <begin position="137"/>
        <end position="146"/>
    </location>
</feature>
<feature type="compositionally biased region" description="Basic residues" evidence="2">
    <location>
        <begin position="217"/>
        <end position="230"/>
    </location>
</feature>
<reference key="1">
    <citation type="journal article" date="1992" name="Virology">
        <title>Sequence changes in the live attenuated, cold-adapted variants of influenza A/Leningrad/134/57 (H2N2) virus.</title>
        <authorList>
            <person name="Klimov A.I."/>
            <person name="Cox N.J."/>
            <person name="Yotov W.V."/>
            <person name="Rocha E."/>
            <person name="Alexandrova G.I."/>
            <person name="Kendal A.P."/>
        </authorList>
    </citation>
    <scope>NUCLEOTIDE SEQUENCE</scope>
</reference>
<reference key="2">
    <citation type="journal article" date="2003" name="Virology">
        <title>Intracellular warfare between human influenza viruses and human cells: the roles of the viral NS1 protein.</title>
        <authorList>
            <person name="Krug R.M."/>
            <person name="Yuan W."/>
            <person name="Noah D.L."/>
            <person name="Latham A.G."/>
        </authorList>
    </citation>
    <scope>REVIEW</scope>
</reference>
<dbReference type="EMBL" id="M81578">
    <property type="protein sequence ID" value="AAA19201.1"/>
    <property type="status" value="ALT_TERM"/>
    <property type="molecule type" value="Unassigned_RNA"/>
</dbReference>
<dbReference type="SMR" id="P69273"/>
<dbReference type="GO" id="GO:0030430">
    <property type="term" value="C:host cell cytoplasm"/>
    <property type="evidence" value="ECO:0007669"/>
    <property type="project" value="UniProtKB-SubCell"/>
</dbReference>
<dbReference type="GO" id="GO:0042025">
    <property type="term" value="C:host cell nucleus"/>
    <property type="evidence" value="ECO:0007669"/>
    <property type="project" value="UniProtKB-SubCell"/>
</dbReference>
<dbReference type="GO" id="GO:0030291">
    <property type="term" value="F:protein serine/threonine kinase inhibitor activity"/>
    <property type="evidence" value="ECO:0007669"/>
    <property type="project" value="UniProtKB-KW"/>
</dbReference>
<dbReference type="GO" id="GO:0003723">
    <property type="term" value="F:RNA binding"/>
    <property type="evidence" value="ECO:0007669"/>
    <property type="project" value="UniProtKB-KW"/>
</dbReference>
<dbReference type="GO" id="GO:0039540">
    <property type="term" value="P:symbiont-mediated suppression of host cytoplasmic pattern recognition receptor signaling pathway via inhibition of RIG-I activity"/>
    <property type="evidence" value="ECO:0007669"/>
    <property type="project" value="UniProtKB-KW"/>
</dbReference>
<dbReference type="GO" id="GO:0039657">
    <property type="term" value="P:symbiont-mediated suppression of host gene expression"/>
    <property type="evidence" value="ECO:0007669"/>
    <property type="project" value="UniProtKB-KW"/>
</dbReference>
<dbReference type="GO" id="GO:0039524">
    <property type="term" value="P:symbiont-mediated suppression of host mRNA processing"/>
    <property type="evidence" value="ECO:0007669"/>
    <property type="project" value="UniProtKB-KW"/>
</dbReference>
<dbReference type="GO" id="GO:0039580">
    <property type="term" value="P:symbiont-mediated suppression of host PKR/eIFalpha signaling"/>
    <property type="evidence" value="ECO:0007669"/>
    <property type="project" value="UniProtKB-KW"/>
</dbReference>
<dbReference type="GO" id="GO:0039502">
    <property type="term" value="P:symbiont-mediated suppression of host type I interferon-mediated signaling pathway"/>
    <property type="evidence" value="ECO:0007669"/>
    <property type="project" value="UniProtKB-KW"/>
</dbReference>
<dbReference type="FunFam" id="1.10.287.10:FF:000001">
    <property type="entry name" value="Non-structural protein 1"/>
    <property type="match status" value="1"/>
</dbReference>
<dbReference type="FunFam" id="3.30.420.330:FF:000001">
    <property type="entry name" value="Non-structural protein 1"/>
    <property type="match status" value="1"/>
</dbReference>
<dbReference type="Gene3D" id="3.30.420.330">
    <property type="entry name" value="Influenza virus non-structural protein, effector domain"/>
    <property type="match status" value="1"/>
</dbReference>
<dbReference type="Gene3D" id="1.10.287.10">
    <property type="entry name" value="S15/NS1, RNA-binding"/>
    <property type="match status" value="1"/>
</dbReference>
<dbReference type="HAMAP" id="MF_04066">
    <property type="entry name" value="INFV_NS1"/>
    <property type="match status" value="1"/>
</dbReference>
<dbReference type="InterPro" id="IPR004208">
    <property type="entry name" value="NS1"/>
</dbReference>
<dbReference type="InterPro" id="IPR000256">
    <property type="entry name" value="NS1A"/>
</dbReference>
<dbReference type="InterPro" id="IPR038064">
    <property type="entry name" value="NS1A_effect_dom-like_sf"/>
</dbReference>
<dbReference type="InterPro" id="IPR009068">
    <property type="entry name" value="uS15_NS1_RNA-bd_sf"/>
</dbReference>
<dbReference type="Pfam" id="PF00600">
    <property type="entry name" value="Flu_NS1"/>
    <property type="match status" value="1"/>
</dbReference>
<dbReference type="SUPFAM" id="SSF143021">
    <property type="entry name" value="Ns1 effector domain-like"/>
    <property type="match status" value="1"/>
</dbReference>
<dbReference type="SUPFAM" id="SSF47060">
    <property type="entry name" value="S15/NS1 RNA-binding domain"/>
    <property type="match status" value="1"/>
</dbReference>
<comment type="function">
    <text evidence="1">Inhibits post-transcriptional processing of cellular pre-mRNA, by binding and inhibiting two cellular proteins that are required for the 3'-end processing of cellular pre-mRNAs: the 30 kDa cleavage and polyadenylation specificity factor/CPSF4 and the poly(A)-binding protein 2/PABPN1. In turn, unprocessed 3' end pre-mRNAs accumulate in the host nucleus and are no longer exported to the cytoplasm. Cellular protein synthesis is thereby shut off very early after virus infection. Viral protein synthesis is not affected by the inhibition of the cellular 3' end processing machinery because the poly(A) tails of viral mRNAs are produced by the viral polymerase through a stuttering mechanism. Prevents the establishment of the cellular antiviral state by inhibiting TRIM25-mediated RIGI ubiquitination, which normally triggers the antiviral transduction signal that leads to the activation of type I IFN genes by transcription factors IRF3 and IRF7. Also binds poly(A) and U6 snRNA. Inhibits the integrated stress response (ISR) in the infected cell by blocking dsRNA binding by EIF2AK2/PKR and further phosphorylation of EIF2S1/EIF-2ALPHA. Stress granule formation is thus inhibited, which allows protein synthesis and viral replication.</text>
</comment>
<comment type="subunit">
    <text evidence="1">Homodimer. Interacts with host TRIM25 (via coiled coil); this interaction specifically inhibits TRIM25 multimerization and TRIM25-mediated RIGI CARD ubiquitination. Interacts with human EIF2AK2/PKR, CPSF4, IVNS1ABP and PABPN1.</text>
</comment>
<comment type="subcellular location">
    <subcellularLocation>
        <location evidence="1">Host nucleus</location>
    </subcellularLocation>
    <subcellularLocation>
        <location evidence="1">Host cytoplasm</location>
    </subcellularLocation>
    <text evidence="1">In uninfected, transfected cells, NS1 is localized in the nucleus. Only in virus infected cells, the nuclear export signal is unveiled, presumably by a viral protein, and a fraction of NS1 is exported in the cytoplasm.</text>
</comment>
<comment type="alternative products">
    <event type="alternative splicing"/>
    <isoform>
        <id>P69273-1</id>
        <name>NS1</name>
        <sequence type="displayed"/>
    </isoform>
    <isoform>
        <id>P69266-1</id>
        <name>NEP</name>
        <name>NS2</name>
        <sequence type="external"/>
    </isoform>
</comment>
<comment type="domain">
    <text evidence="1">The dsRNA-binding region is required for suppression of RNA silencing.</text>
</comment>
<comment type="PTM">
    <text evidence="1">Upon interferon induction, ISGylated via host HERC5; this results in the impairment of NS1 interaction with RNA targets due to its inability to form homodimers and to interact with host EIF2AK2/PKR.</text>
</comment>
<comment type="similarity">
    <text evidence="1">Belongs to the influenza A viruses NS1 family.</text>
</comment>
<organismHost>
    <name type="scientific">Aves</name>
    <dbReference type="NCBI Taxonomy" id="8782"/>
</organismHost>
<organismHost>
    <name type="scientific">Homo sapiens</name>
    <name type="common">Human</name>
    <dbReference type="NCBI Taxonomy" id="9606"/>
</organismHost>